<sequence length="238" mass="26992">MSRSTMLAHSAIPSSLIRMDLLSPWILTATAPKFLRLFAPATRRRSARSTIPSWSRSSSGKQAHHAWLSSITPCDGARSPWLARIPMAASSLQAQSPLGARRRVYQHLPEEADRLLKGRAQIVNVWRPLRGPVQDWPLAVMDCSTLAQAHIHPTKLYRNRFELRGETVSISHDESQRWYYLDGQQTDECTLIKIWDSKEGISGHMCAHCAFQHPNTPVDAPLRESVEVRCLVFYENQE</sequence>
<reference key="1">
    <citation type="journal article" date="2005" name="Nature">
        <title>Genome sequencing and analysis of Aspergillus oryzae.</title>
        <authorList>
            <person name="Machida M."/>
            <person name="Asai K."/>
            <person name="Sano M."/>
            <person name="Tanaka T."/>
            <person name="Kumagai T."/>
            <person name="Terai G."/>
            <person name="Kusumoto K."/>
            <person name="Arima T."/>
            <person name="Akita O."/>
            <person name="Kashiwagi Y."/>
            <person name="Abe K."/>
            <person name="Gomi K."/>
            <person name="Horiuchi H."/>
            <person name="Kitamoto K."/>
            <person name="Kobayashi T."/>
            <person name="Takeuchi M."/>
            <person name="Denning D.W."/>
            <person name="Galagan J.E."/>
            <person name="Nierman W.C."/>
            <person name="Yu J."/>
            <person name="Archer D.B."/>
            <person name="Bennett J.W."/>
            <person name="Bhatnagar D."/>
            <person name="Cleveland T.E."/>
            <person name="Fedorova N.D."/>
            <person name="Gotoh O."/>
            <person name="Horikawa H."/>
            <person name="Hosoyama A."/>
            <person name="Ichinomiya M."/>
            <person name="Igarashi R."/>
            <person name="Iwashita K."/>
            <person name="Juvvadi P.R."/>
            <person name="Kato M."/>
            <person name="Kato Y."/>
            <person name="Kin T."/>
            <person name="Kokubun A."/>
            <person name="Maeda H."/>
            <person name="Maeyama N."/>
            <person name="Maruyama J."/>
            <person name="Nagasaki H."/>
            <person name="Nakajima T."/>
            <person name="Oda K."/>
            <person name="Okada K."/>
            <person name="Paulsen I."/>
            <person name="Sakamoto K."/>
            <person name="Sawano T."/>
            <person name="Takahashi M."/>
            <person name="Takase K."/>
            <person name="Terabayashi Y."/>
            <person name="Wortman J.R."/>
            <person name="Yamada O."/>
            <person name="Yamagata Y."/>
            <person name="Anazawa H."/>
            <person name="Hata Y."/>
            <person name="Koide Y."/>
            <person name="Komori T."/>
            <person name="Koyama Y."/>
            <person name="Minetoki T."/>
            <person name="Suharnan S."/>
            <person name="Tanaka A."/>
            <person name="Isono K."/>
            <person name="Kuhara S."/>
            <person name="Ogasawara N."/>
            <person name="Kikuchi H."/>
        </authorList>
    </citation>
    <scope>NUCLEOTIDE SEQUENCE [LARGE SCALE GENOMIC DNA]</scope>
    <source>
        <strain>ATCC 42149 / RIB 40</strain>
    </source>
</reference>
<reference key="2">
    <citation type="journal article" date="2014" name="Angew. Chem. Int. Ed.">
        <title>Biosynthesis of the halogenated mycotoxin aspirochlorine in koji mold involves a cryptic amino acid conversion.</title>
        <authorList>
            <person name="Chankhamjon P."/>
            <person name="Boettger-Schmidt D."/>
            <person name="Scherlach K."/>
            <person name="Urbansky B."/>
            <person name="Lackner G."/>
            <person name="Kalb D."/>
            <person name="Dahse H.M."/>
            <person name="Hoffmeister D."/>
            <person name="Hertweck C."/>
        </authorList>
    </citation>
    <scope>FUNCTION</scope>
    <scope>PATHWAY</scope>
</reference>
<evidence type="ECO:0000269" key="1">
    <source>
    </source>
</evidence>
<evidence type="ECO:0000303" key="2">
    <source>
    </source>
</evidence>
<evidence type="ECO:0000305" key="3"/>
<evidence type="ECO:0000305" key="4">
    <source>
    </source>
</evidence>
<feature type="chain" id="PRO_0000441194" description="Aspirochlorine biosynthesis protein N">
    <location>
        <begin position="1"/>
        <end position="238"/>
    </location>
</feature>
<keyword id="KW-1185">Reference proteome</keyword>
<proteinExistence type="inferred from homology"/>
<name>ACLN_ASPOR</name>
<organism>
    <name type="scientific">Aspergillus oryzae (strain ATCC 42149 / RIB 40)</name>
    <name type="common">Yellow koji mold</name>
    <dbReference type="NCBI Taxonomy" id="510516"/>
    <lineage>
        <taxon>Eukaryota</taxon>
        <taxon>Fungi</taxon>
        <taxon>Dikarya</taxon>
        <taxon>Ascomycota</taxon>
        <taxon>Pezizomycotina</taxon>
        <taxon>Eurotiomycetes</taxon>
        <taxon>Eurotiomycetidae</taxon>
        <taxon>Eurotiales</taxon>
        <taxon>Aspergillaceae</taxon>
        <taxon>Aspergillus</taxon>
        <taxon>Aspergillus subgen. Circumdati</taxon>
    </lineage>
</organism>
<protein>
    <recommendedName>
        <fullName evidence="2">Aspirochlorine biosynthesis protein N</fullName>
    </recommendedName>
</protein>
<accession>Q2UPB6</accession>
<dbReference type="EMBL" id="BA000050">
    <property type="protein sequence ID" value="BAE56599.1"/>
    <property type="molecule type" value="Genomic_DNA"/>
</dbReference>
<dbReference type="SMR" id="Q2UPB6"/>
<dbReference type="EnsemblFungi" id="BAE56599">
    <property type="protein sequence ID" value="BAE56599"/>
    <property type="gene ID" value="AO090001000036"/>
</dbReference>
<dbReference type="HOGENOM" id="CLU_042688_0_1_1"/>
<dbReference type="OMA" id="PTHPHIN"/>
<dbReference type="Proteomes" id="UP000006564">
    <property type="component" value="Chromosome 2"/>
</dbReference>
<dbReference type="GO" id="GO:0016491">
    <property type="term" value="F:oxidoreductase activity"/>
    <property type="evidence" value="ECO:0007669"/>
    <property type="project" value="InterPro"/>
</dbReference>
<dbReference type="InterPro" id="IPR044053">
    <property type="entry name" value="AsaB-like"/>
</dbReference>
<dbReference type="NCBIfam" id="NF041278">
    <property type="entry name" value="CmcJ_NvfI_EfuI"/>
    <property type="match status" value="1"/>
</dbReference>
<dbReference type="PANTHER" id="PTHR34598">
    <property type="entry name" value="BLL6449 PROTEIN"/>
    <property type="match status" value="1"/>
</dbReference>
<dbReference type="PANTHER" id="PTHR34598:SF3">
    <property type="entry name" value="OXIDOREDUCTASE AN1597"/>
    <property type="match status" value="1"/>
</dbReference>
<comment type="function">
    <text evidence="1">Part of the gene cluster that mediates the biosynthesis of aspirochlorine (or antibiotic A30641), an unusual halogenated spiro compound with distinctive antifungal properties due to selective inhibition of protein biosynthesis, and which is also active against bacteria, viruses, and murine tumor cells (PubMed:25302411). The non-ribosomal peptide synthetase (NRPS) aclP is responsible the formation of the diketopiperazine (DKP) core from the condensation of 2 phenylalanine residues (PubMed:25302411). One Phe residue is tailored into chlorotyrosine by hydroxylation and chlorination, whereas the second Phe undergoes an unprecedented C-C bond cleavage to be converted into glycine (PubMed:25302411). After formation of the DKP, sulfur is incorporated into the DKP by conjugation with glutathione by aclG, followed by its stepwise degradation to the thiol by aclI, aclJ and aclK, and the dithiol oxidation by aclT (PubMed:25302411). In addition, oxygenases (aclB, aclC, aclL and aclO) and O-methyltransferases (aclM and aclU) act as tailoring enzymes to produce the intermediate dechloroaspirochlorine (PubMed:25302411). Ultimately, chlorination of dechloroaspirochlorine by the halogenase aclH is the last step in the aspirochlorine pathway (PubMed:25302411).</text>
</comment>
<comment type="pathway">
    <text evidence="4">Mycotoxin biosynthesis.</text>
</comment>
<comment type="similarity">
    <text evidence="3">Belongs to the asaB hydroxylase/desaturase family.</text>
</comment>
<gene>
    <name evidence="2" type="primary">aclN</name>
    <name type="ORF">AO090001000036</name>
</gene>